<sequence>MLADRFTGSGLPSRLMRRVLAYIALTKPRVIELLLVATIPTMLLADRGHIDIRLILATLFGGWMGAASANTLNCVADADIDKVMKRTAKRPLARDAVPTRNAFVFGVVLGLASFAWLWWQANLLSGALVVATILFYVFVYTLGLKRRTSQNVVWGGAAGCMPALVGWSAVTGTIGWPALALFGVIFFWTPPHTWALAMRYKEDYRAAGVPMLPVVATERTVTKQIVIYTWLTVLTTLALVPATGVIYAAVALVAGAWFLLMAHQLYAGVRRGESVKPLRLFLQSNNYLAVVFCGLAVDSVLGWDTIGSFFG</sequence>
<name>COXX_NOCFA</name>
<reference key="1">
    <citation type="journal article" date="2004" name="Proc. Natl. Acad. Sci. U.S.A.">
        <title>The complete genomic sequence of Nocardia farcinica IFM 10152.</title>
        <authorList>
            <person name="Ishikawa J."/>
            <person name="Yamashita A."/>
            <person name="Mikami Y."/>
            <person name="Hoshino Y."/>
            <person name="Kurita H."/>
            <person name="Hotta K."/>
            <person name="Shiba T."/>
            <person name="Hattori M."/>
        </authorList>
    </citation>
    <scope>NUCLEOTIDE SEQUENCE [LARGE SCALE GENOMIC DNA]</scope>
    <source>
        <strain>IFM 10152</strain>
    </source>
</reference>
<organism>
    <name type="scientific">Nocardia farcinica (strain IFM 10152)</name>
    <dbReference type="NCBI Taxonomy" id="247156"/>
    <lineage>
        <taxon>Bacteria</taxon>
        <taxon>Bacillati</taxon>
        <taxon>Actinomycetota</taxon>
        <taxon>Actinomycetes</taxon>
        <taxon>Mycobacteriales</taxon>
        <taxon>Nocardiaceae</taxon>
        <taxon>Nocardia</taxon>
    </lineage>
</organism>
<accession>Q5YTS1</accession>
<dbReference type="EC" id="2.5.1.141" evidence="1"/>
<dbReference type="EMBL" id="AP006618">
    <property type="protein sequence ID" value="BAD58420.1"/>
    <property type="molecule type" value="Genomic_DNA"/>
</dbReference>
<dbReference type="SMR" id="Q5YTS1"/>
<dbReference type="STRING" id="247156.NFA_35720"/>
<dbReference type="KEGG" id="nfa:NFA_35720"/>
<dbReference type="eggNOG" id="COG0109">
    <property type="taxonomic scope" value="Bacteria"/>
</dbReference>
<dbReference type="HOGENOM" id="CLU_029631_0_1_11"/>
<dbReference type="UniPathway" id="UPA00834">
    <property type="reaction ID" value="UER00712"/>
</dbReference>
<dbReference type="Proteomes" id="UP000006820">
    <property type="component" value="Chromosome"/>
</dbReference>
<dbReference type="GO" id="GO:0005886">
    <property type="term" value="C:plasma membrane"/>
    <property type="evidence" value="ECO:0007669"/>
    <property type="project" value="UniProtKB-SubCell"/>
</dbReference>
<dbReference type="GO" id="GO:0008495">
    <property type="term" value="F:protoheme IX farnesyltransferase activity"/>
    <property type="evidence" value="ECO:0007669"/>
    <property type="project" value="UniProtKB-UniRule"/>
</dbReference>
<dbReference type="GO" id="GO:0048034">
    <property type="term" value="P:heme O biosynthetic process"/>
    <property type="evidence" value="ECO:0007669"/>
    <property type="project" value="UniProtKB-UniRule"/>
</dbReference>
<dbReference type="CDD" id="cd13957">
    <property type="entry name" value="PT_UbiA_Cox10"/>
    <property type="match status" value="1"/>
</dbReference>
<dbReference type="FunFam" id="1.10.357.140:FF:000001">
    <property type="entry name" value="Protoheme IX farnesyltransferase"/>
    <property type="match status" value="1"/>
</dbReference>
<dbReference type="Gene3D" id="1.10.357.140">
    <property type="entry name" value="UbiA prenyltransferase"/>
    <property type="match status" value="1"/>
</dbReference>
<dbReference type="HAMAP" id="MF_00154">
    <property type="entry name" value="CyoE_CtaB"/>
    <property type="match status" value="1"/>
</dbReference>
<dbReference type="InterPro" id="IPR006369">
    <property type="entry name" value="Protohaem_IX_farnesylTrfase"/>
</dbReference>
<dbReference type="InterPro" id="IPR000537">
    <property type="entry name" value="UbiA_prenyltransferase"/>
</dbReference>
<dbReference type="InterPro" id="IPR044878">
    <property type="entry name" value="UbiA_sf"/>
</dbReference>
<dbReference type="NCBIfam" id="TIGR01473">
    <property type="entry name" value="cyoE_ctaB"/>
    <property type="match status" value="1"/>
</dbReference>
<dbReference type="NCBIfam" id="NF003349">
    <property type="entry name" value="PRK04375.1-2"/>
    <property type="match status" value="1"/>
</dbReference>
<dbReference type="PANTHER" id="PTHR43448:SF7">
    <property type="entry name" value="4-HYDROXYBENZOATE SOLANESYLTRANSFERASE"/>
    <property type="match status" value="1"/>
</dbReference>
<dbReference type="PANTHER" id="PTHR43448">
    <property type="entry name" value="PROTOHEME IX FARNESYLTRANSFERASE, MITOCHONDRIAL"/>
    <property type="match status" value="1"/>
</dbReference>
<dbReference type="Pfam" id="PF01040">
    <property type="entry name" value="UbiA"/>
    <property type="match status" value="1"/>
</dbReference>
<keyword id="KW-1003">Cell membrane</keyword>
<keyword id="KW-0350">Heme biosynthesis</keyword>
<keyword id="KW-0472">Membrane</keyword>
<keyword id="KW-1185">Reference proteome</keyword>
<keyword id="KW-0808">Transferase</keyword>
<keyword id="KW-0812">Transmembrane</keyword>
<keyword id="KW-1133">Transmembrane helix</keyword>
<feature type="chain" id="PRO_0000327102" description="Protoheme IX farnesyltransferase">
    <location>
        <begin position="1"/>
        <end position="311"/>
    </location>
</feature>
<feature type="transmembrane region" description="Helical" evidence="1">
    <location>
        <begin position="19"/>
        <end position="39"/>
    </location>
</feature>
<feature type="transmembrane region" description="Helical" evidence="1">
    <location>
        <begin position="55"/>
        <end position="75"/>
    </location>
</feature>
<feature type="transmembrane region" description="Helical" evidence="1">
    <location>
        <begin position="101"/>
        <end position="121"/>
    </location>
</feature>
<feature type="transmembrane region" description="Helical" evidence="1">
    <location>
        <begin position="123"/>
        <end position="143"/>
    </location>
</feature>
<feature type="transmembrane region" description="Helical" evidence="1">
    <location>
        <begin position="169"/>
        <end position="189"/>
    </location>
</feature>
<feature type="transmembrane region" description="Helical" evidence="1">
    <location>
        <begin position="221"/>
        <end position="241"/>
    </location>
</feature>
<feature type="transmembrane region" description="Helical" evidence="1">
    <location>
        <begin position="242"/>
        <end position="262"/>
    </location>
</feature>
<feature type="transmembrane region" description="Helical" evidence="1">
    <location>
        <begin position="290"/>
        <end position="310"/>
    </location>
</feature>
<protein>
    <recommendedName>
        <fullName evidence="1">Protoheme IX farnesyltransferase</fullName>
        <ecNumber evidence="1">2.5.1.141</ecNumber>
    </recommendedName>
    <alternativeName>
        <fullName evidence="1">Heme B farnesyltransferase</fullName>
    </alternativeName>
    <alternativeName>
        <fullName evidence="1">Heme O synthase</fullName>
    </alternativeName>
</protein>
<comment type="function">
    <text evidence="1">Converts heme B (protoheme IX) to heme O by substitution of the vinyl group on carbon 2 of heme B porphyrin ring with a hydroxyethyl farnesyl side group.</text>
</comment>
<comment type="catalytic activity">
    <reaction evidence="1">
        <text>heme b + (2E,6E)-farnesyl diphosphate + H2O = Fe(II)-heme o + diphosphate</text>
        <dbReference type="Rhea" id="RHEA:28070"/>
        <dbReference type="ChEBI" id="CHEBI:15377"/>
        <dbReference type="ChEBI" id="CHEBI:33019"/>
        <dbReference type="ChEBI" id="CHEBI:60344"/>
        <dbReference type="ChEBI" id="CHEBI:60530"/>
        <dbReference type="ChEBI" id="CHEBI:175763"/>
        <dbReference type="EC" id="2.5.1.141"/>
    </reaction>
</comment>
<comment type="pathway">
    <text evidence="1">Porphyrin-containing compound metabolism; heme O biosynthesis; heme O from protoheme: step 1/1.</text>
</comment>
<comment type="subcellular location">
    <subcellularLocation>
        <location evidence="1">Cell membrane</location>
        <topology evidence="1">Multi-pass membrane protein</topology>
    </subcellularLocation>
</comment>
<comment type="miscellaneous">
    <text evidence="1">Carbon 2 of the heme B porphyrin ring is defined according to the Fischer nomenclature.</text>
</comment>
<comment type="similarity">
    <text evidence="1">Belongs to the UbiA prenyltransferase family. Protoheme IX farnesyltransferase subfamily.</text>
</comment>
<evidence type="ECO:0000255" key="1">
    <source>
        <dbReference type="HAMAP-Rule" id="MF_00154"/>
    </source>
</evidence>
<proteinExistence type="inferred from homology"/>
<gene>
    <name evidence="1" type="primary">ctaB</name>
    <name type="ordered locus">NFA_35720</name>
</gene>